<reference key="1">
    <citation type="journal article" date="2007" name="Mol. Biol. Evol.">
        <title>The complete chloroplast and mitochondrial DNA sequence of Ostreococcus tauri: organelle genomes of the smallest eukaryote are examples of compaction.</title>
        <authorList>
            <person name="Robbens S."/>
            <person name="Derelle E."/>
            <person name="Ferraz C."/>
            <person name="Wuyts J."/>
            <person name="Moreau H."/>
            <person name="Van de Peer Y."/>
        </authorList>
    </citation>
    <scope>NUCLEOTIDE SEQUENCE [LARGE SCALE GENOMIC DNA]</scope>
    <source>
        <strain>OTTH0595</strain>
    </source>
</reference>
<proteinExistence type="inferred from homology"/>
<accession>Q0P3J3</accession>
<keyword id="KW-0007">Acetylation</keyword>
<keyword id="KW-0113">Calvin cycle</keyword>
<keyword id="KW-0120">Carbon dioxide fixation</keyword>
<keyword id="KW-0150">Chloroplast</keyword>
<keyword id="KW-0456">Lyase</keyword>
<keyword id="KW-0460">Magnesium</keyword>
<keyword id="KW-0479">Metal-binding</keyword>
<keyword id="KW-0503">Monooxygenase</keyword>
<keyword id="KW-0560">Oxidoreductase</keyword>
<keyword id="KW-0601">Photorespiration</keyword>
<keyword id="KW-0602">Photosynthesis</keyword>
<keyword id="KW-0934">Plastid</keyword>
<keyword id="KW-1185">Reference proteome</keyword>
<evidence type="ECO:0000255" key="1">
    <source>
        <dbReference type="HAMAP-Rule" id="MF_01338"/>
    </source>
</evidence>
<sequence length="475" mass="52520">MAPQTETKTGTGFQAGVKDYRLTYYTPDYQVKETDILAAFRMTPQPGVPAEECGAAVAAESSTGTWTTVWTDGLTQLDRYKGRCYDLEPVPGEDNQFIAYVAYPLDLFEEGSVTNLFTSIVGNVFGFKALRALRLEDLRIPVAYCKTFQGAPHGIQTERDKLNKYGRGLLGCTIKPKLGLSAKNYGRAVYECLRGGLDFTKDDENVNSQPFMRWRDRFLFVAEAIYKSQAETGEIKGHYLNATAGNVDQMLKRAQVAKELGMPIIMHDYLTAGFTANTTLATYCREEGLLLHIHRAMHAVIDRQRNHGIHFRVLAKALRLSGGDHLHSGTVVGKLEGERNVTLGFVDLMRDAYVEKDRDRGIYFSQDWASLPGVMPVASGGIHVWHMPALVEIFGDDACLQFGGGTLGHPWGNAPGASANRVALEACTQARNEGRDLAREGGDVIRAACKWSPELAAACEVWKEIKFEFDTVDTL</sequence>
<geneLocation type="chloroplast"/>
<feature type="propeptide" id="PRO_0000251427" evidence="1">
    <location>
        <begin position="1"/>
        <end position="2"/>
    </location>
</feature>
<feature type="chain" id="PRO_0000251428" description="Ribulose bisphosphate carboxylase large chain">
    <location>
        <begin position="3"/>
        <end position="475"/>
    </location>
</feature>
<feature type="active site" description="Proton acceptor" evidence="1">
    <location>
        <position position="175"/>
    </location>
</feature>
<feature type="active site" description="Proton acceptor" evidence="1">
    <location>
        <position position="294"/>
    </location>
</feature>
<feature type="binding site" description="in homodimeric partner" evidence="1">
    <location>
        <position position="123"/>
    </location>
    <ligand>
        <name>substrate</name>
    </ligand>
</feature>
<feature type="binding site" evidence="1">
    <location>
        <position position="173"/>
    </location>
    <ligand>
        <name>substrate</name>
    </ligand>
</feature>
<feature type="binding site" evidence="1">
    <location>
        <position position="177"/>
    </location>
    <ligand>
        <name>substrate</name>
    </ligand>
</feature>
<feature type="binding site" description="via carbamate group" evidence="1">
    <location>
        <position position="201"/>
    </location>
    <ligand>
        <name>Mg(2+)</name>
        <dbReference type="ChEBI" id="CHEBI:18420"/>
    </ligand>
</feature>
<feature type="binding site" evidence="1">
    <location>
        <position position="203"/>
    </location>
    <ligand>
        <name>Mg(2+)</name>
        <dbReference type="ChEBI" id="CHEBI:18420"/>
    </ligand>
</feature>
<feature type="binding site" evidence="1">
    <location>
        <position position="204"/>
    </location>
    <ligand>
        <name>Mg(2+)</name>
        <dbReference type="ChEBI" id="CHEBI:18420"/>
    </ligand>
</feature>
<feature type="binding site" evidence="1">
    <location>
        <position position="295"/>
    </location>
    <ligand>
        <name>substrate</name>
    </ligand>
</feature>
<feature type="binding site" evidence="1">
    <location>
        <position position="327"/>
    </location>
    <ligand>
        <name>substrate</name>
    </ligand>
</feature>
<feature type="binding site" evidence="1">
    <location>
        <position position="379"/>
    </location>
    <ligand>
        <name>substrate</name>
    </ligand>
</feature>
<feature type="site" description="Transition state stabilizer" evidence="1">
    <location>
        <position position="334"/>
    </location>
</feature>
<feature type="modified residue" description="N-acetylproline" evidence="1">
    <location>
        <position position="3"/>
    </location>
</feature>
<feature type="modified residue" description="N6-carboxylysine" evidence="1">
    <location>
        <position position="201"/>
    </location>
</feature>
<gene>
    <name evidence="1" type="primary">rbcL</name>
    <name type="ordered locus">OtCpg00590</name>
</gene>
<name>RBL_OSTTA</name>
<dbReference type="EC" id="4.1.1.39" evidence="1"/>
<dbReference type="EMBL" id="CR954199">
    <property type="protein sequence ID" value="CAL36384.1"/>
    <property type="molecule type" value="Genomic_DNA"/>
</dbReference>
<dbReference type="RefSeq" id="YP_717262.1">
    <property type="nucleotide sequence ID" value="NC_008289.1"/>
</dbReference>
<dbReference type="SMR" id="Q0P3J3"/>
<dbReference type="FunCoup" id="Q0P3J3">
    <property type="interactions" value="228"/>
</dbReference>
<dbReference type="STRING" id="70448.Q0P3J3"/>
<dbReference type="GeneID" id="4238788"/>
<dbReference type="KEGG" id="ota:OstapCp59"/>
<dbReference type="eggNOG" id="ENOG502QTI9">
    <property type="taxonomic scope" value="Eukaryota"/>
</dbReference>
<dbReference type="InParanoid" id="Q0P3J3"/>
<dbReference type="Proteomes" id="UP000009170">
    <property type="component" value="Chloroplast"/>
</dbReference>
<dbReference type="GO" id="GO:0009507">
    <property type="term" value="C:chloroplast"/>
    <property type="evidence" value="ECO:0007669"/>
    <property type="project" value="UniProtKB-SubCell"/>
</dbReference>
<dbReference type="GO" id="GO:0000287">
    <property type="term" value="F:magnesium ion binding"/>
    <property type="evidence" value="ECO:0007669"/>
    <property type="project" value="UniProtKB-UniRule"/>
</dbReference>
<dbReference type="GO" id="GO:0004497">
    <property type="term" value="F:monooxygenase activity"/>
    <property type="evidence" value="ECO:0007669"/>
    <property type="project" value="UniProtKB-KW"/>
</dbReference>
<dbReference type="GO" id="GO:0016984">
    <property type="term" value="F:ribulose-bisphosphate carboxylase activity"/>
    <property type="evidence" value="ECO:0007669"/>
    <property type="project" value="UniProtKB-UniRule"/>
</dbReference>
<dbReference type="GO" id="GO:0009853">
    <property type="term" value="P:photorespiration"/>
    <property type="evidence" value="ECO:0007669"/>
    <property type="project" value="UniProtKB-KW"/>
</dbReference>
<dbReference type="GO" id="GO:0019253">
    <property type="term" value="P:reductive pentose-phosphate cycle"/>
    <property type="evidence" value="ECO:0007669"/>
    <property type="project" value="UniProtKB-UniRule"/>
</dbReference>
<dbReference type="CDD" id="cd08212">
    <property type="entry name" value="RuBisCO_large_I"/>
    <property type="match status" value="1"/>
</dbReference>
<dbReference type="Gene3D" id="3.20.20.110">
    <property type="entry name" value="Ribulose bisphosphate carboxylase, large subunit, C-terminal domain"/>
    <property type="match status" value="1"/>
</dbReference>
<dbReference type="Gene3D" id="3.30.70.150">
    <property type="entry name" value="RuBisCO large subunit, N-terminal domain"/>
    <property type="match status" value="1"/>
</dbReference>
<dbReference type="HAMAP" id="MF_01338">
    <property type="entry name" value="RuBisCO_L_type1"/>
    <property type="match status" value="1"/>
</dbReference>
<dbReference type="InterPro" id="IPR033966">
    <property type="entry name" value="RuBisCO"/>
</dbReference>
<dbReference type="InterPro" id="IPR020878">
    <property type="entry name" value="RuBisCo_large_chain_AS"/>
</dbReference>
<dbReference type="InterPro" id="IPR000685">
    <property type="entry name" value="RuBisCO_lsu_C"/>
</dbReference>
<dbReference type="InterPro" id="IPR036376">
    <property type="entry name" value="RuBisCO_lsu_C_sf"/>
</dbReference>
<dbReference type="InterPro" id="IPR017443">
    <property type="entry name" value="RuBisCO_lsu_fd_N"/>
</dbReference>
<dbReference type="InterPro" id="IPR036422">
    <property type="entry name" value="RuBisCO_lsu_N_sf"/>
</dbReference>
<dbReference type="InterPro" id="IPR020888">
    <property type="entry name" value="RuBisCO_lsuI"/>
</dbReference>
<dbReference type="NCBIfam" id="NF003252">
    <property type="entry name" value="PRK04208.1"/>
    <property type="match status" value="1"/>
</dbReference>
<dbReference type="PANTHER" id="PTHR42704">
    <property type="entry name" value="RIBULOSE BISPHOSPHATE CARBOXYLASE"/>
    <property type="match status" value="1"/>
</dbReference>
<dbReference type="PANTHER" id="PTHR42704:SF17">
    <property type="entry name" value="RIBULOSE BISPHOSPHATE CARBOXYLASE LARGE CHAIN"/>
    <property type="match status" value="1"/>
</dbReference>
<dbReference type="Pfam" id="PF00016">
    <property type="entry name" value="RuBisCO_large"/>
    <property type="match status" value="1"/>
</dbReference>
<dbReference type="Pfam" id="PF02788">
    <property type="entry name" value="RuBisCO_large_N"/>
    <property type="match status" value="1"/>
</dbReference>
<dbReference type="SFLD" id="SFLDG01052">
    <property type="entry name" value="RuBisCO"/>
    <property type="match status" value="1"/>
</dbReference>
<dbReference type="SFLD" id="SFLDS00014">
    <property type="entry name" value="RuBisCO"/>
    <property type="match status" value="1"/>
</dbReference>
<dbReference type="SFLD" id="SFLDG00301">
    <property type="entry name" value="RuBisCO-like_proteins"/>
    <property type="match status" value="1"/>
</dbReference>
<dbReference type="SUPFAM" id="SSF51649">
    <property type="entry name" value="RuBisCo, C-terminal domain"/>
    <property type="match status" value="1"/>
</dbReference>
<dbReference type="SUPFAM" id="SSF54966">
    <property type="entry name" value="RuBisCO, large subunit, small (N-terminal) domain"/>
    <property type="match status" value="1"/>
</dbReference>
<dbReference type="PROSITE" id="PS00157">
    <property type="entry name" value="RUBISCO_LARGE"/>
    <property type="match status" value="1"/>
</dbReference>
<protein>
    <recommendedName>
        <fullName evidence="1">Ribulose bisphosphate carboxylase large chain</fullName>
        <shortName evidence="1">RuBisCO large subunit</shortName>
        <ecNumber evidence="1">4.1.1.39</ecNumber>
    </recommendedName>
</protein>
<comment type="function">
    <text evidence="1">RuBisCO catalyzes two reactions: the carboxylation of D-ribulose 1,5-bisphosphate, the primary event in carbon dioxide fixation, as well as the oxidative fragmentation of the pentose substrate in the photorespiration process. Both reactions occur simultaneously and in competition at the same active site.</text>
</comment>
<comment type="catalytic activity">
    <reaction evidence="1">
        <text>2 (2R)-3-phosphoglycerate + 2 H(+) = D-ribulose 1,5-bisphosphate + CO2 + H2O</text>
        <dbReference type="Rhea" id="RHEA:23124"/>
        <dbReference type="ChEBI" id="CHEBI:15377"/>
        <dbReference type="ChEBI" id="CHEBI:15378"/>
        <dbReference type="ChEBI" id="CHEBI:16526"/>
        <dbReference type="ChEBI" id="CHEBI:57870"/>
        <dbReference type="ChEBI" id="CHEBI:58272"/>
        <dbReference type="EC" id="4.1.1.39"/>
    </reaction>
</comment>
<comment type="catalytic activity">
    <reaction evidence="1">
        <text>D-ribulose 1,5-bisphosphate + O2 = 2-phosphoglycolate + (2R)-3-phosphoglycerate + 2 H(+)</text>
        <dbReference type="Rhea" id="RHEA:36631"/>
        <dbReference type="ChEBI" id="CHEBI:15378"/>
        <dbReference type="ChEBI" id="CHEBI:15379"/>
        <dbReference type="ChEBI" id="CHEBI:57870"/>
        <dbReference type="ChEBI" id="CHEBI:58033"/>
        <dbReference type="ChEBI" id="CHEBI:58272"/>
    </reaction>
</comment>
<comment type="cofactor">
    <cofactor evidence="1">
        <name>Mg(2+)</name>
        <dbReference type="ChEBI" id="CHEBI:18420"/>
    </cofactor>
    <text evidence="1">Binds 1 Mg(2+) ion per subunit.</text>
</comment>
<comment type="subunit">
    <text evidence="1">Heterohexadecamer of 8 large chains and 8 small chains.</text>
</comment>
<comment type="subcellular location">
    <subcellularLocation>
        <location>Plastid</location>
        <location>Chloroplast</location>
    </subcellularLocation>
</comment>
<comment type="miscellaneous">
    <text evidence="1">The basic functional RuBisCO is composed of a large chain homodimer in a 'head-to-tail' conformation. In form I RuBisCO this homodimer is arranged in a barrel-like tetramer with the small subunits forming a tetrameric 'cap' on each end of the 'barrel'.</text>
</comment>
<comment type="similarity">
    <text evidence="1">Belongs to the RuBisCO large chain family. Type I subfamily.</text>
</comment>
<organism>
    <name type="scientific">Ostreococcus tauri</name>
    <dbReference type="NCBI Taxonomy" id="70448"/>
    <lineage>
        <taxon>Eukaryota</taxon>
        <taxon>Viridiplantae</taxon>
        <taxon>Chlorophyta</taxon>
        <taxon>Mamiellophyceae</taxon>
        <taxon>Mamiellales</taxon>
        <taxon>Bathycoccaceae</taxon>
        <taxon>Ostreococcus</taxon>
    </lineage>
</organism>